<gene>
    <name evidence="1" type="primary">pyrG</name>
    <name type="ordered locus">SERP1734</name>
</gene>
<proteinExistence type="inferred from homology"/>
<name>PYRG_STAEQ</name>
<accession>Q5HM95</accession>
<comment type="function">
    <text evidence="1">Catalyzes the ATP-dependent amination of UTP to CTP with either L-glutamine or ammonia as the source of nitrogen. Regulates intracellular CTP levels through interactions with the four ribonucleotide triphosphates.</text>
</comment>
<comment type="catalytic activity">
    <reaction evidence="1">
        <text>UTP + L-glutamine + ATP + H2O = CTP + L-glutamate + ADP + phosphate + 2 H(+)</text>
        <dbReference type="Rhea" id="RHEA:26426"/>
        <dbReference type="ChEBI" id="CHEBI:15377"/>
        <dbReference type="ChEBI" id="CHEBI:15378"/>
        <dbReference type="ChEBI" id="CHEBI:29985"/>
        <dbReference type="ChEBI" id="CHEBI:30616"/>
        <dbReference type="ChEBI" id="CHEBI:37563"/>
        <dbReference type="ChEBI" id="CHEBI:43474"/>
        <dbReference type="ChEBI" id="CHEBI:46398"/>
        <dbReference type="ChEBI" id="CHEBI:58359"/>
        <dbReference type="ChEBI" id="CHEBI:456216"/>
        <dbReference type="EC" id="6.3.4.2"/>
    </reaction>
</comment>
<comment type="catalytic activity">
    <reaction evidence="1">
        <text>L-glutamine + H2O = L-glutamate + NH4(+)</text>
        <dbReference type="Rhea" id="RHEA:15889"/>
        <dbReference type="ChEBI" id="CHEBI:15377"/>
        <dbReference type="ChEBI" id="CHEBI:28938"/>
        <dbReference type="ChEBI" id="CHEBI:29985"/>
        <dbReference type="ChEBI" id="CHEBI:58359"/>
    </reaction>
</comment>
<comment type="catalytic activity">
    <reaction evidence="1">
        <text>UTP + NH4(+) + ATP = CTP + ADP + phosphate + 2 H(+)</text>
        <dbReference type="Rhea" id="RHEA:16597"/>
        <dbReference type="ChEBI" id="CHEBI:15378"/>
        <dbReference type="ChEBI" id="CHEBI:28938"/>
        <dbReference type="ChEBI" id="CHEBI:30616"/>
        <dbReference type="ChEBI" id="CHEBI:37563"/>
        <dbReference type="ChEBI" id="CHEBI:43474"/>
        <dbReference type="ChEBI" id="CHEBI:46398"/>
        <dbReference type="ChEBI" id="CHEBI:456216"/>
    </reaction>
</comment>
<comment type="activity regulation">
    <text evidence="1">Allosterically activated by GTP, when glutamine is the substrate; GTP has no effect on the reaction when ammonia is the substrate. The allosteric effector GTP functions by stabilizing the protein conformation that binds the tetrahedral intermediate(s) formed during glutamine hydrolysis. Inhibited by the product CTP, via allosteric rather than competitive inhibition.</text>
</comment>
<comment type="pathway">
    <text evidence="1">Pyrimidine metabolism; CTP biosynthesis via de novo pathway; CTP from UDP: step 2/2.</text>
</comment>
<comment type="subunit">
    <text evidence="1">Homotetramer.</text>
</comment>
<comment type="miscellaneous">
    <text evidence="1">CTPSs have evolved a hybrid strategy for distinguishing between UTP and CTP. The overlapping regions of the product feedback inhibitory and substrate sites recognize a common feature in both compounds, the triphosphate moiety. To differentiate isosteric substrate and product pyrimidine rings, an additional pocket far from the expected kinase/ligase catalytic site, specifically recognizes the cytosine and ribose portions of the product inhibitor.</text>
</comment>
<comment type="similarity">
    <text evidence="1">Belongs to the CTP synthase family.</text>
</comment>
<sequence length="535" mass="60212">MTKFIFVTGGVVSSLGKGITAASLGRLLKDRGLKVTIQKFDPYLNVDPGTMSPYQHGEVFVTDDGAETDLDLGHYERFIDINLNKYSNVTAGKVYSHVLKKERRGDYLGGTVQVIPHITNEIKERLLLAGESTNADVVITEIGGTTGDIESLPFLEAIRQIRSDLGRENVMYVHCTLLPYIKAAGEMKTKPTQHSVKELRGLGIQPDLIVVRTEYEMTQDLKDKIALFCDIKKESVIECRDADSLYEIPLQLSKQNMDDIVIQRLQLNAKYETQLDEWKHLLNTVNNLDGKITIGLVGKYVSLQDAYLSVVESLKHAGYPFKKDVVVKWIDSSEVNDDNVEAYLSDVDGILVPGGFGFRASEGKIAAIRYARENNIPFFGICLGMQLATVEFARHVLGYEGAHSAELDPSTPYPIIDLLPEQKDIEDLGGTLRLGLYPCHIKEGTLAEKIYNKNDIEERHRHRYEFNNEFREQLESNGMVFSGTSPDGRLVEIIEIPKNDFFIACQFHPEFLSRPNRPQPIFKSFVEAALNYQQK</sequence>
<keyword id="KW-0067">ATP-binding</keyword>
<keyword id="KW-0315">Glutamine amidotransferase</keyword>
<keyword id="KW-0436">Ligase</keyword>
<keyword id="KW-0460">Magnesium</keyword>
<keyword id="KW-0479">Metal-binding</keyword>
<keyword id="KW-0547">Nucleotide-binding</keyword>
<keyword id="KW-0665">Pyrimidine biosynthesis</keyword>
<keyword id="KW-1185">Reference proteome</keyword>
<reference key="1">
    <citation type="journal article" date="2005" name="J. Bacteriol.">
        <title>Insights on evolution of virulence and resistance from the complete genome analysis of an early methicillin-resistant Staphylococcus aureus strain and a biofilm-producing methicillin-resistant Staphylococcus epidermidis strain.</title>
        <authorList>
            <person name="Gill S.R."/>
            <person name="Fouts D.E."/>
            <person name="Archer G.L."/>
            <person name="Mongodin E.F."/>
            <person name="DeBoy R.T."/>
            <person name="Ravel J."/>
            <person name="Paulsen I.T."/>
            <person name="Kolonay J.F."/>
            <person name="Brinkac L.M."/>
            <person name="Beanan M.J."/>
            <person name="Dodson R.J."/>
            <person name="Daugherty S.C."/>
            <person name="Madupu R."/>
            <person name="Angiuoli S.V."/>
            <person name="Durkin A.S."/>
            <person name="Haft D.H."/>
            <person name="Vamathevan J.J."/>
            <person name="Khouri H."/>
            <person name="Utterback T.R."/>
            <person name="Lee C."/>
            <person name="Dimitrov G."/>
            <person name="Jiang L."/>
            <person name="Qin H."/>
            <person name="Weidman J."/>
            <person name="Tran K."/>
            <person name="Kang K.H."/>
            <person name="Hance I.R."/>
            <person name="Nelson K.E."/>
            <person name="Fraser C.M."/>
        </authorList>
    </citation>
    <scope>NUCLEOTIDE SEQUENCE [LARGE SCALE GENOMIC DNA]</scope>
    <source>
        <strain>ATCC 35984 / DSM 28319 / BCRC 17069 / CCUG 31568 / BM 3577 / RP62A</strain>
    </source>
</reference>
<organism>
    <name type="scientific">Staphylococcus epidermidis (strain ATCC 35984 / DSM 28319 / BCRC 17069 / CCUG 31568 / BM 3577 / RP62A)</name>
    <dbReference type="NCBI Taxonomy" id="176279"/>
    <lineage>
        <taxon>Bacteria</taxon>
        <taxon>Bacillati</taxon>
        <taxon>Bacillota</taxon>
        <taxon>Bacilli</taxon>
        <taxon>Bacillales</taxon>
        <taxon>Staphylococcaceae</taxon>
        <taxon>Staphylococcus</taxon>
    </lineage>
</organism>
<dbReference type="EC" id="6.3.4.2" evidence="1"/>
<dbReference type="EMBL" id="CP000029">
    <property type="protein sequence ID" value="AAW55056.1"/>
    <property type="molecule type" value="Genomic_DNA"/>
</dbReference>
<dbReference type="RefSeq" id="WP_001829895.1">
    <property type="nucleotide sequence ID" value="NC_002976.3"/>
</dbReference>
<dbReference type="SMR" id="Q5HM95"/>
<dbReference type="STRING" id="176279.SERP1734"/>
<dbReference type="MEROPS" id="C26.964"/>
<dbReference type="KEGG" id="ser:SERP1734"/>
<dbReference type="eggNOG" id="COG0504">
    <property type="taxonomic scope" value="Bacteria"/>
</dbReference>
<dbReference type="HOGENOM" id="CLU_011675_5_0_9"/>
<dbReference type="UniPathway" id="UPA00159">
    <property type="reaction ID" value="UER00277"/>
</dbReference>
<dbReference type="Proteomes" id="UP000000531">
    <property type="component" value="Chromosome"/>
</dbReference>
<dbReference type="GO" id="GO:0005829">
    <property type="term" value="C:cytosol"/>
    <property type="evidence" value="ECO:0007669"/>
    <property type="project" value="TreeGrafter"/>
</dbReference>
<dbReference type="GO" id="GO:0005524">
    <property type="term" value="F:ATP binding"/>
    <property type="evidence" value="ECO:0007669"/>
    <property type="project" value="UniProtKB-KW"/>
</dbReference>
<dbReference type="GO" id="GO:0003883">
    <property type="term" value="F:CTP synthase activity"/>
    <property type="evidence" value="ECO:0007669"/>
    <property type="project" value="UniProtKB-UniRule"/>
</dbReference>
<dbReference type="GO" id="GO:0004359">
    <property type="term" value="F:glutaminase activity"/>
    <property type="evidence" value="ECO:0007669"/>
    <property type="project" value="RHEA"/>
</dbReference>
<dbReference type="GO" id="GO:0042802">
    <property type="term" value="F:identical protein binding"/>
    <property type="evidence" value="ECO:0007669"/>
    <property type="project" value="TreeGrafter"/>
</dbReference>
<dbReference type="GO" id="GO:0046872">
    <property type="term" value="F:metal ion binding"/>
    <property type="evidence" value="ECO:0007669"/>
    <property type="project" value="UniProtKB-KW"/>
</dbReference>
<dbReference type="GO" id="GO:0044210">
    <property type="term" value="P:'de novo' CTP biosynthetic process"/>
    <property type="evidence" value="ECO:0007669"/>
    <property type="project" value="UniProtKB-UniRule"/>
</dbReference>
<dbReference type="GO" id="GO:0019856">
    <property type="term" value="P:pyrimidine nucleobase biosynthetic process"/>
    <property type="evidence" value="ECO:0007669"/>
    <property type="project" value="TreeGrafter"/>
</dbReference>
<dbReference type="CDD" id="cd03113">
    <property type="entry name" value="CTPS_N"/>
    <property type="match status" value="1"/>
</dbReference>
<dbReference type="CDD" id="cd01746">
    <property type="entry name" value="GATase1_CTP_Synthase"/>
    <property type="match status" value="1"/>
</dbReference>
<dbReference type="FunFam" id="3.40.50.300:FF:000009">
    <property type="entry name" value="CTP synthase"/>
    <property type="match status" value="1"/>
</dbReference>
<dbReference type="FunFam" id="3.40.50.880:FF:000002">
    <property type="entry name" value="CTP synthase"/>
    <property type="match status" value="1"/>
</dbReference>
<dbReference type="Gene3D" id="3.40.50.880">
    <property type="match status" value="1"/>
</dbReference>
<dbReference type="Gene3D" id="3.40.50.300">
    <property type="entry name" value="P-loop containing nucleotide triphosphate hydrolases"/>
    <property type="match status" value="1"/>
</dbReference>
<dbReference type="HAMAP" id="MF_01227">
    <property type="entry name" value="PyrG"/>
    <property type="match status" value="1"/>
</dbReference>
<dbReference type="InterPro" id="IPR029062">
    <property type="entry name" value="Class_I_gatase-like"/>
</dbReference>
<dbReference type="InterPro" id="IPR004468">
    <property type="entry name" value="CTP_synthase"/>
</dbReference>
<dbReference type="InterPro" id="IPR017456">
    <property type="entry name" value="CTP_synthase_N"/>
</dbReference>
<dbReference type="InterPro" id="IPR017926">
    <property type="entry name" value="GATASE"/>
</dbReference>
<dbReference type="InterPro" id="IPR033828">
    <property type="entry name" value="GATase1_CTP_Synthase"/>
</dbReference>
<dbReference type="InterPro" id="IPR027417">
    <property type="entry name" value="P-loop_NTPase"/>
</dbReference>
<dbReference type="NCBIfam" id="NF003792">
    <property type="entry name" value="PRK05380.1"/>
    <property type="match status" value="1"/>
</dbReference>
<dbReference type="NCBIfam" id="TIGR00337">
    <property type="entry name" value="PyrG"/>
    <property type="match status" value="1"/>
</dbReference>
<dbReference type="PANTHER" id="PTHR11550">
    <property type="entry name" value="CTP SYNTHASE"/>
    <property type="match status" value="1"/>
</dbReference>
<dbReference type="PANTHER" id="PTHR11550:SF0">
    <property type="entry name" value="CTP SYNTHASE-RELATED"/>
    <property type="match status" value="1"/>
</dbReference>
<dbReference type="Pfam" id="PF06418">
    <property type="entry name" value="CTP_synth_N"/>
    <property type="match status" value="1"/>
</dbReference>
<dbReference type="Pfam" id="PF00117">
    <property type="entry name" value="GATase"/>
    <property type="match status" value="1"/>
</dbReference>
<dbReference type="SUPFAM" id="SSF52317">
    <property type="entry name" value="Class I glutamine amidotransferase-like"/>
    <property type="match status" value="1"/>
</dbReference>
<dbReference type="SUPFAM" id="SSF52540">
    <property type="entry name" value="P-loop containing nucleoside triphosphate hydrolases"/>
    <property type="match status" value="1"/>
</dbReference>
<dbReference type="PROSITE" id="PS51273">
    <property type="entry name" value="GATASE_TYPE_1"/>
    <property type="match status" value="1"/>
</dbReference>
<evidence type="ECO:0000255" key="1">
    <source>
        <dbReference type="HAMAP-Rule" id="MF_01227"/>
    </source>
</evidence>
<feature type="chain" id="PRO_0000138229" description="CTP synthase">
    <location>
        <begin position="1"/>
        <end position="535"/>
    </location>
</feature>
<feature type="domain" description="Glutamine amidotransferase type-1" evidence="1">
    <location>
        <begin position="293"/>
        <end position="535"/>
    </location>
</feature>
<feature type="region of interest" description="Amidoligase domain" evidence="1">
    <location>
        <begin position="1"/>
        <end position="267"/>
    </location>
</feature>
<feature type="active site" description="Nucleophile; for glutamine hydrolysis" evidence="1">
    <location>
        <position position="382"/>
    </location>
</feature>
<feature type="active site" evidence="1">
    <location>
        <position position="508"/>
    </location>
</feature>
<feature type="active site" evidence="1">
    <location>
        <position position="510"/>
    </location>
</feature>
<feature type="binding site" evidence="1">
    <location>
        <position position="13"/>
    </location>
    <ligand>
        <name>CTP</name>
        <dbReference type="ChEBI" id="CHEBI:37563"/>
        <note>allosteric inhibitor</note>
    </ligand>
</feature>
<feature type="binding site" evidence="1">
    <location>
        <position position="13"/>
    </location>
    <ligand>
        <name>UTP</name>
        <dbReference type="ChEBI" id="CHEBI:46398"/>
    </ligand>
</feature>
<feature type="binding site" evidence="1">
    <location>
        <begin position="14"/>
        <end position="19"/>
    </location>
    <ligand>
        <name>ATP</name>
        <dbReference type="ChEBI" id="CHEBI:30616"/>
    </ligand>
</feature>
<feature type="binding site" evidence="1">
    <location>
        <position position="54"/>
    </location>
    <ligand>
        <name>L-glutamine</name>
        <dbReference type="ChEBI" id="CHEBI:58359"/>
    </ligand>
</feature>
<feature type="binding site" evidence="1">
    <location>
        <position position="71"/>
    </location>
    <ligand>
        <name>ATP</name>
        <dbReference type="ChEBI" id="CHEBI:30616"/>
    </ligand>
</feature>
<feature type="binding site" evidence="1">
    <location>
        <position position="71"/>
    </location>
    <ligand>
        <name>Mg(2+)</name>
        <dbReference type="ChEBI" id="CHEBI:18420"/>
    </ligand>
</feature>
<feature type="binding site" evidence="1">
    <location>
        <position position="141"/>
    </location>
    <ligand>
        <name>Mg(2+)</name>
        <dbReference type="ChEBI" id="CHEBI:18420"/>
    </ligand>
</feature>
<feature type="binding site" evidence="1">
    <location>
        <begin position="148"/>
        <end position="150"/>
    </location>
    <ligand>
        <name>CTP</name>
        <dbReference type="ChEBI" id="CHEBI:37563"/>
        <note>allosteric inhibitor</note>
    </ligand>
</feature>
<feature type="binding site" evidence="1">
    <location>
        <begin position="188"/>
        <end position="193"/>
    </location>
    <ligand>
        <name>CTP</name>
        <dbReference type="ChEBI" id="CHEBI:37563"/>
        <note>allosteric inhibitor</note>
    </ligand>
</feature>
<feature type="binding site" evidence="1">
    <location>
        <begin position="188"/>
        <end position="193"/>
    </location>
    <ligand>
        <name>UTP</name>
        <dbReference type="ChEBI" id="CHEBI:46398"/>
    </ligand>
</feature>
<feature type="binding site" evidence="1">
    <location>
        <position position="224"/>
    </location>
    <ligand>
        <name>CTP</name>
        <dbReference type="ChEBI" id="CHEBI:37563"/>
        <note>allosteric inhibitor</note>
    </ligand>
</feature>
<feature type="binding site" evidence="1">
    <location>
        <position position="224"/>
    </location>
    <ligand>
        <name>UTP</name>
        <dbReference type="ChEBI" id="CHEBI:46398"/>
    </ligand>
</feature>
<feature type="binding site" evidence="1">
    <location>
        <begin position="240"/>
        <end position="242"/>
    </location>
    <ligand>
        <name>ATP</name>
        <dbReference type="ChEBI" id="CHEBI:30616"/>
    </ligand>
</feature>
<feature type="binding site" evidence="1">
    <location>
        <position position="355"/>
    </location>
    <ligand>
        <name>L-glutamine</name>
        <dbReference type="ChEBI" id="CHEBI:58359"/>
    </ligand>
</feature>
<feature type="binding site" evidence="1">
    <location>
        <begin position="383"/>
        <end position="386"/>
    </location>
    <ligand>
        <name>L-glutamine</name>
        <dbReference type="ChEBI" id="CHEBI:58359"/>
    </ligand>
</feature>
<feature type="binding site" evidence="1">
    <location>
        <position position="406"/>
    </location>
    <ligand>
        <name>L-glutamine</name>
        <dbReference type="ChEBI" id="CHEBI:58359"/>
    </ligand>
</feature>
<feature type="binding site" evidence="1">
    <location>
        <position position="463"/>
    </location>
    <ligand>
        <name>L-glutamine</name>
        <dbReference type="ChEBI" id="CHEBI:58359"/>
    </ligand>
</feature>
<protein>
    <recommendedName>
        <fullName evidence="1">CTP synthase</fullName>
        <ecNumber evidence="1">6.3.4.2</ecNumber>
    </recommendedName>
    <alternativeName>
        <fullName evidence="1">Cytidine 5'-triphosphate synthase</fullName>
    </alternativeName>
    <alternativeName>
        <fullName evidence="1">Cytidine triphosphate synthetase</fullName>
        <shortName evidence="1">CTP synthetase</shortName>
        <shortName evidence="1">CTPS</shortName>
    </alternativeName>
    <alternativeName>
        <fullName evidence="1">UTP--ammonia ligase</fullName>
    </alternativeName>
</protein>